<keyword id="KW-0012">Acyltransferase</keyword>
<keyword id="KW-1185">Reference proteome</keyword>
<keyword id="KW-0808">Transferase</keyword>
<gene>
    <name evidence="1" type="primary">ypeA</name>
    <name type="ordered locus">Ecok1_23440</name>
    <name type="ORF">APECO1_4114</name>
</gene>
<reference key="1">
    <citation type="journal article" date="2007" name="J. Bacteriol.">
        <title>The genome sequence of avian pathogenic Escherichia coli strain O1:K1:H7 shares strong similarities with human extraintestinal pathogenic E. coli genomes.</title>
        <authorList>
            <person name="Johnson T.J."/>
            <person name="Kariyawasam S."/>
            <person name="Wannemuehler Y."/>
            <person name="Mangiamele P."/>
            <person name="Johnson S.J."/>
            <person name="Doetkott C."/>
            <person name="Skyberg J.A."/>
            <person name="Lynne A.M."/>
            <person name="Johnson J.R."/>
            <person name="Nolan L.K."/>
        </authorList>
    </citation>
    <scope>NUCLEOTIDE SEQUENCE [LARGE SCALE GENOMIC DNA]</scope>
</reference>
<name>YPEA_ECOK1</name>
<comment type="similarity">
    <text evidence="1">Belongs to the acetyltransferase family. YpeA subfamily.</text>
</comment>
<organism>
    <name type="scientific">Escherichia coli O1:K1 / APEC</name>
    <dbReference type="NCBI Taxonomy" id="405955"/>
    <lineage>
        <taxon>Bacteria</taxon>
        <taxon>Pseudomonadati</taxon>
        <taxon>Pseudomonadota</taxon>
        <taxon>Gammaproteobacteria</taxon>
        <taxon>Enterobacterales</taxon>
        <taxon>Enterobacteriaceae</taxon>
        <taxon>Escherichia</taxon>
    </lineage>
</organism>
<sequence length="141" mass="16326">MEIRVFRQEDFEEVITLWERCDLLRPWNDPEMDIERKMNHDVSLFLVAEVNGEVVGTVMGGYDGHRGSAYYLGVHPEFRGRGIANALLNRLEKKLIARGCPKIQINVPEDNDMVLGMYERLGYEHADVLSLGKRLIEDEEY</sequence>
<proteinExistence type="inferred from homology"/>
<feature type="chain" id="PRO_0000298440" description="Acetyltransferase YpeA">
    <location>
        <begin position="1"/>
        <end position="141"/>
    </location>
</feature>
<feature type="domain" description="N-acetyltransferase" evidence="1">
    <location>
        <begin position="1"/>
        <end position="141"/>
    </location>
</feature>
<protein>
    <recommendedName>
        <fullName evidence="1">Acetyltransferase YpeA</fullName>
        <ecNumber evidence="1">2.3.1.-</ecNumber>
    </recommendedName>
</protein>
<accession>A1ADU8</accession>
<evidence type="ECO:0000255" key="1">
    <source>
        <dbReference type="HAMAP-Rule" id="MF_01127"/>
    </source>
</evidence>
<dbReference type="EC" id="2.3.1.-" evidence="1"/>
<dbReference type="EMBL" id="CP000468">
    <property type="protein sequence ID" value="ABJ01838.1"/>
    <property type="molecule type" value="Genomic_DNA"/>
</dbReference>
<dbReference type="RefSeq" id="WP_000406000.1">
    <property type="nucleotide sequence ID" value="NZ_CADILS010000039.1"/>
</dbReference>
<dbReference type="SMR" id="A1ADU8"/>
<dbReference type="KEGG" id="ecv:APECO1_4114"/>
<dbReference type="HOGENOM" id="CLU_013985_34_1_6"/>
<dbReference type="Proteomes" id="UP000008216">
    <property type="component" value="Chromosome"/>
</dbReference>
<dbReference type="GO" id="GO:0016747">
    <property type="term" value="F:acyltransferase activity, transferring groups other than amino-acyl groups"/>
    <property type="evidence" value="ECO:0007669"/>
    <property type="project" value="UniProtKB-UniRule"/>
</dbReference>
<dbReference type="CDD" id="cd04301">
    <property type="entry name" value="NAT_SF"/>
    <property type="match status" value="1"/>
</dbReference>
<dbReference type="Gene3D" id="3.40.630.30">
    <property type="match status" value="1"/>
</dbReference>
<dbReference type="HAMAP" id="MF_01127">
    <property type="entry name" value="Acetyltransf_YpeA"/>
    <property type="match status" value="1"/>
</dbReference>
<dbReference type="InterPro" id="IPR023072">
    <property type="entry name" value="Acetyltransferase_YpeA"/>
</dbReference>
<dbReference type="InterPro" id="IPR016181">
    <property type="entry name" value="Acyl_CoA_acyltransferase"/>
</dbReference>
<dbReference type="InterPro" id="IPR050832">
    <property type="entry name" value="Bact_Acetyltransf"/>
</dbReference>
<dbReference type="InterPro" id="IPR000182">
    <property type="entry name" value="GNAT_dom"/>
</dbReference>
<dbReference type="NCBIfam" id="NF002959">
    <property type="entry name" value="PRK03624.1"/>
    <property type="match status" value="1"/>
</dbReference>
<dbReference type="PANTHER" id="PTHR43877">
    <property type="entry name" value="AMINOALKYLPHOSPHONATE N-ACETYLTRANSFERASE-RELATED-RELATED"/>
    <property type="match status" value="1"/>
</dbReference>
<dbReference type="Pfam" id="PF00583">
    <property type="entry name" value="Acetyltransf_1"/>
    <property type="match status" value="1"/>
</dbReference>
<dbReference type="SUPFAM" id="SSF55729">
    <property type="entry name" value="Acyl-CoA N-acyltransferases (Nat)"/>
    <property type="match status" value="1"/>
</dbReference>
<dbReference type="PROSITE" id="PS51186">
    <property type="entry name" value="GNAT"/>
    <property type="match status" value="1"/>
</dbReference>